<evidence type="ECO:0000250" key="1"/>
<evidence type="ECO:0000255" key="2"/>
<evidence type="ECO:0000305" key="3"/>
<feature type="chain" id="PRO_0000296647" description="Replication factor C small subunit, 1st part" evidence="2">
    <location>
        <begin position="1"/>
        <end position="61"/>
    </location>
</feature>
<feature type="chain" id="PRO_0000296648" description="Hwa RFC intein" evidence="2">
    <location>
        <begin position="62"/>
        <end position="384"/>
    </location>
</feature>
<feature type="chain" id="PRO_0000296649" description="Replication factor C small subunit, 2nd part" evidence="2">
    <location>
        <begin position="385"/>
        <end position="649"/>
    </location>
</feature>
<feature type="binding site" evidence="2">
    <location>
        <begin position="55"/>
        <end position="385"/>
    </location>
    <ligand>
        <name>ATP</name>
        <dbReference type="ChEBI" id="CHEBI:30616"/>
    </ligand>
</feature>
<keyword id="KW-0067">ATP-binding</keyword>
<keyword id="KW-0068">Autocatalytic cleavage</keyword>
<keyword id="KW-0235">DNA replication</keyword>
<keyword id="KW-0547">Nucleotide-binding</keyword>
<keyword id="KW-0651">Protein splicing</keyword>
<keyword id="KW-1185">Reference proteome</keyword>
<proteinExistence type="inferred from homology"/>
<organism>
    <name type="scientific">Haloquadratum walsbyi (strain DSM 16790 / HBSQ001)</name>
    <dbReference type="NCBI Taxonomy" id="362976"/>
    <lineage>
        <taxon>Archaea</taxon>
        <taxon>Methanobacteriati</taxon>
        <taxon>Methanobacteriota</taxon>
        <taxon>Stenosarchaea group</taxon>
        <taxon>Halobacteria</taxon>
        <taxon>Halobacteriales</taxon>
        <taxon>Haloferacaceae</taxon>
        <taxon>Haloquadratum</taxon>
    </lineage>
</organism>
<reference key="1">
    <citation type="journal article" date="2006" name="BMC Genomics">
        <title>The genome of the square archaeon Haloquadratum walsbyi: life at the limits of water activity.</title>
        <authorList>
            <person name="Bolhuis H."/>
            <person name="Palm P."/>
            <person name="Wende A."/>
            <person name="Falb M."/>
            <person name="Rampp M."/>
            <person name="Rodriguez-Valera F."/>
            <person name="Pfeiffer F."/>
            <person name="Oesterhelt D."/>
        </authorList>
    </citation>
    <scope>NUCLEOTIDE SEQUENCE [LARGE SCALE GENOMIC DNA]</scope>
    <source>
        <strain>DSM 16790 / HBSQ001</strain>
    </source>
</reference>
<name>RFCS_HALWD</name>
<dbReference type="EMBL" id="AM180088">
    <property type="protein sequence ID" value="CAJ53758.1"/>
    <property type="molecule type" value="Genomic_DNA"/>
</dbReference>
<dbReference type="RefSeq" id="WP_011572840.1">
    <property type="nucleotide sequence ID" value="NC_008212.1"/>
</dbReference>
<dbReference type="SMR" id="Q18E75"/>
<dbReference type="STRING" id="362976.HQ_3671A"/>
<dbReference type="GeneID" id="95969040"/>
<dbReference type="KEGG" id="hwa:HQ_3671A"/>
<dbReference type="eggNOG" id="arCOG00469">
    <property type="taxonomic scope" value="Archaea"/>
</dbReference>
<dbReference type="eggNOG" id="arCOG03146">
    <property type="taxonomic scope" value="Archaea"/>
</dbReference>
<dbReference type="HOGENOM" id="CLU_015698_2_1_2"/>
<dbReference type="Proteomes" id="UP000001975">
    <property type="component" value="Chromosome"/>
</dbReference>
<dbReference type="GO" id="GO:0005663">
    <property type="term" value="C:DNA replication factor C complex"/>
    <property type="evidence" value="ECO:0007669"/>
    <property type="project" value="TreeGrafter"/>
</dbReference>
<dbReference type="GO" id="GO:0005524">
    <property type="term" value="F:ATP binding"/>
    <property type="evidence" value="ECO:0007669"/>
    <property type="project" value="UniProtKB-KW"/>
</dbReference>
<dbReference type="GO" id="GO:0016887">
    <property type="term" value="F:ATP hydrolysis activity"/>
    <property type="evidence" value="ECO:0007669"/>
    <property type="project" value="InterPro"/>
</dbReference>
<dbReference type="GO" id="GO:0003677">
    <property type="term" value="F:DNA binding"/>
    <property type="evidence" value="ECO:0007669"/>
    <property type="project" value="InterPro"/>
</dbReference>
<dbReference type="GO" id="GO:0003689">
    <property type="term" value="F:DNA clamp loader activity"/>
    <property type="evidence" value="ECO:0007669"/>
    <property type="project" value="TreeGrafter"/>
</dbReference>
<dbReference type="GO" id="GO:0006281">
    <property type="term" value="P:DNA repair"/>
    <property type="evidence" value="ECO:0007669"/>
    <property type="project" value="TreeGrafter"/>
</dbReference>
<dbReference type="GO" id="GO:0006261">
    <property type="term" value="P:DNA-templated DNA replication"/>
    <property type="evidence" value="ECO:0007669"/>
    <property type="project" value="TreeGrafter"/>
</dbReference>
<dbReference type="GO" id="GO:0016539">
    <property type="term" value="P:intein-mediated protein splicing"/>
    <property type="evidence" value="ECO:0007669"/>
    <property type="project" value="InterPro"/>
</dbReference>
<dbReference type="CDD" id="cd00009">
    <property type="entry name" value="AAA"/>
    <property type="match status" value="1"/>
</dbReference>
<dbReference type="CDD" id="cd00081">
    <property type="entry name" value="Hint"/>
    <property type="match status" value="1"/>
</dbReference>
<dbReference type="CDD" id="cd18140">
    <property type="entry name" value="HLD_clamp_RFC"/>
    <property type="match status" value="1"/>
</dbReference>
<dbReference type="FunFam" id="1.20.272.10:FF:000029">
    <property type="entry name" value="Replication factor C small subunit"/>
    <property type="match status" value="1"/>
</dbReference>
<dbReference type="Gene3D" id="1.10.8.60">
    <property type="match status" value="1"/>
</dbReference>
<dbReference type="Gene3D" id="1.20.272.10">
    <property type="match status" value="1"/>
</dbReference>
<dbReference type="Gene3D" id="2.170.16.10">
    <property type="entry name" value="Hedgehog/Intein (Hint) domain"/>
    <property type="match status" value="1"/>
</dbReference>
<dbReference type="Gene3D" id="3.40.50.300">
    <property type="entry name" value="P-loop containing nucleotide triphosphate hydrolases"/>
    <property type="match status" value="2"/>
</dbReference>
<dbReference type="InterPro" id="IPR003959">
    <property type="entry name" value="ATPase_AAA_core"/>
</dbReference>
<dbReference type="InterPro" id="IPR008921">
    <property type="entry name" value="DNA_pol3_clamp-load_cplx_C"/>
</dbReference>
<dbReference type="InterPro" id="IPR050238">
    <property type="entry name" value="DNA_Rep/Repair_Clamp_Loader"/>
</dbReference>
<dbReference type="InterPro" id="IPR003587">
    <property type="entry name" value="Hint_dom_N"/>
</dbReference>
<dbReference type="InterPro" id="IPR036844">
    <property type="entry name" value="Hint_dom_sf"/>
</dbReference>
<dbReference type="InterPro" id="IPR006142">
    <property type="entry name" value="INTEIN"/>
</dbReference>
<dbReference type="InterPro" id="IPR030934">
    <property type="entry name" value="Intein_C"/>
</dbReference>
<dbReference type="InterPro" id="IPR006141">
    <property type="entry name" value="Intein_N"/>
</dbReference>
<dbReference type="InterPro" id="IPR027417">
    <property type="entry name" value="P-loop_NTPase"/>
</dbReference>
<dbReference type="InterPro" id="IPR013748">
    <property type="entry name" value="Rep_factorC_C"/>
</dbReference>
<dbReference type="InterPro" id="IPR047854">
    <property type="entry name" value="RFC_lid"/>
</dbReference>
<dbReference type="NCBIfam" id="TIGR01445">
    <property type="entry name" value="intein_Nterm"/>
    <property type="match status" value="1"/>
</dbReference>
<dbReference type="NCBIfam" id="NF001679">
    <property type="entry name" value="PRK00440.1"/>
    <property type="match status" value="1"/>
</dbReference>
<dbReference type="PANTHER" id="PTHR11669">
    <property type="entry name" value="REPLICATION FACTOR C / DNA POLYMERASE III GAMMA-TAU SUBUNIT"/>
    <property type="match status" value="1"/>
</dbReference>
<dbReference type="PANTHER" id="PTHR11669:SF20">
    <property type="entry name" value="REPLICATION FACTOR C SUBUNIT 4"/>
    <property type="match status" value="1"/>
</dbReference>
<dbReference type="Pfam" id="PF00004">
    <property type="entry name" value="AAA"/>
    <property type="match status" value="1"/>
</dbReference>
<dbReference type="Pfam" id="PF14890">
    <property type="entry name" value="Intein_splicing"/>
    <property type="match status" value="1"/>
</dbReference>
<dbReference type="Pfam" id="PF08542">
    <property type="entry name" value="Rep_fac_C"/>
    <property type="match status" value="1"/>
</dbReference>
<dbReference type="PRINTS" id="PR00379">
    <property type="entry name" value="INTEIN"/>
</dbReference>
<dbReference type="SMART" id="SM00306">
    <property type="entry name" value="HintN"/>
    <property type="match status" value="1"/>
</dbReference>
<dbReference type="SUPFAM" id="SSF51294">
    <property type="entry name" value="Hedgehog/intein (Hint) domain"/>
    <property type="match status" value="1"/>
</dbReference>
<dbReference type="SUPFAM" id="SSF52540">
    <property type="entry name" value="P-loop containing nucleoside triphosphate hydrolases"/>
    <property type="match status" value="2"/>
</dbReference>
<dbReference type="SUPFAM" id="SSF48019">
    <property type="entry name" value="post-AAA+ oligomerization domain-like"/>
    <property type="match status" value="1"/>
</dbReference>
<dbReference type="PROSITE" id="PS50818">
    <property type="entry name" value="INTEIN_C_TER"/>
    <property type="match status" value="1"/>
</dbReference>
<dbReference type="PROSITE" id="PS50817">
    <property type="entry name" value="INTEIN_N_TER"/>
    <property type="match status" value="1"/>
</dbReference>
<sequence>MSEADASDAAPTGREIWIEKYRPATLENIYGQEDTVDRLQSYIDRDDLPHLLFAGPAGVGKCVTGSTPILTNKGIRQIGEIVGDVDGFAPAPQNLKVCSLTADGSFQYRHPSHVFGKRASGLQRIKTNDGATLTVTPEHKLLIRTGENTNPTWVPAADITAGMHVLRAKNLPIPAETTGSCAASKNASEVSHIGDEYRYHDSLMADVNTRIATLERLIEDYAESRSDGSLKFTLIGAHTPTVSTVSYLLATVGIASRHTSTLIDSEKRVHAIIIDASDTVRLEEMIETDWDTVMADQTTTVTSSSTASTTKTTQSYLSSGETQTCGWIPYADGGVTHPSTQHSPLHADVVTVSESLDAEKRVYDLTVPGVRNYVGGCIPTVMHNTTAATAIAHAVYGDDWQNNLLELNASDERGIDVVRDRIKNFARSSFGGYDHRIIFLDEADSLTDDAQSALRRTMEQFADNTRFILSCNYSSKIIDPIQSRCAVFRFSPLSETAIRGQTKDIAAAENIELTEDGLDALVYAAGGDMRRAINSLQAAATTGEVVDEETVYTITSTARPEDIETMVTAAIDGDFTTARSQLQTLLVDTGMAGGDIIDQLHRTAWNLDLDEETTVRLLERVGEADYRITVGANEQVQLEALLASLADTQ</sequence>
<comment type="function">
    <text evidence="1">Part of the RFC clamp loader complex which loads the PCNA sliding clamp onto DNA.</text>
</comment>
<comment type="subunit">
    <text evidence="1">Heteromultimer composed of small subunits (RfcS) and large subunits (RfcL).</text>
</comment>
<comment type="PTM">
    <text evidence="3">This protein undergoes a protein self splicing that involves a post-translational excision of the intervening region (intein) followed by peptide ligation.</text>
</comment>
<comment type="similarity">
    <text evidence="3">Belongs to the activator 1 small subunits family. RfcS subfamily.</text>
</comment>
<accession>Q18E75</accession>
<protein>
    <recommendedName>
        <fullName>Replication factor C small subunit</fullName>
        <shortName>RFC small subunit</shortName>
    </recommendedName>
    <alternativeName>
        <fullName>Clamp loader small subunit</fullName>
    </alternativeName>
    <component>
        <recommendedName>
            <fullName>Hwa RFC intein</fullName>
        </recommendedName>
    </component>
</protein>
<gene>
    <name type="primary">rfcS</name>
    <name type="ordered locus">HQ_3671A</name>
</gene>